<protein>
    <recommendedName>
        <fullName evidence="1">HTH-type transcriptional regulator Hpr</fullName>
    </recommendedName>
    <alternativeName>
        <fullName evidence="1">Protease production regulatory protein Hpr</fullName>
    </alternativeName>
</protein>
<proteinExistence type="inferred from homology"/>
<evidence type="ECO:0000255" key="1">
    <source>
        <dbReference type="HAMAP-Rule" id="MF_01911"/>
    </source>
</evidence>
<dbReference type="EMBL" id="CP001176">
    <property type="protein sequence ID" value="ACK63266.1"/>
    <property type="molecule type" value="Genomic_DNA"/>
</dbReference>
<dbReference type="RefSeq" id="WP_000834924.1">
    <property type="nucleotide sequence ID" value="NZ_VEHB01000015.1"/>
</dbReference>
<dbReference type="SMR" id="B7HG19"/>
<dbReference type="KEGG" id="bcb:BCB4264_A1081"/>
<dbReference type="HOGENOM" id="CLU_115790_0_0_9"/>
<dbReference type="Proteomes" id="UP000007096">
    <property type="component" value="Chromosome"/>
</dbReference>
<dbReference type="GO" id="GO:0003677">
    <property type="term" value="F:DNA binding"/>
    <property type="evidence" value="ECO:0007669"/>
    <property type="project" value="UniProtKB-UniRule"/>
</dbReference>
<dbReference type="GO" id="GO:0003700">
    <property type="term" value="F:DNA-binding transcription factor activity"/>
    <property type="evidence" value="ECO:0007669"/>
    <property type="project" value="UniProtKB-UniRule"/>
</dbReference>
<dbReference type="GO" id="GO:0045892">
    <property type="term" value="P:negative regulation of DNA-templated transcription"/>
    <property type="evidence" value="ECO:0007669"/>
    <property type="project" value="UniProtKB-UniRule"/>
</dbReference>
<dbReference type="GO" id="GO:0006950">
    <property type="term" value="P:response to stress"/>
    <property type="evidence" value="ECO:0007669"/>
    <property type="project" value="TreeGrafter"/>
</dbReference>
<dbReference type="GO" id="GO:0030435">
    <property type="term" value="P:sporulation resulting in formation of a cellular spore"/>
    <property type="evidence" value="ECO:0007669"/>
    <property type="project" value="UniProtKB-UniRule"/>
</dbReference>
<dbReference type="FunFam" id="1.10.10.10:FF:000194">
    <property type="entry name" value="HTH-type transcriptional regulator Hpr"/>
    <property type="match status" value="1"/>
</dbReference>
<dbReference type="Gene3D" id="1.10.10.10">
    <property type="entry name" value="Winged helix-like DNA-binding domain superfamily/Winged helix DNA-binding domain"/>
    <property type="match status" value="1"/>
</dbReference>
<dbReference type="HAMAP" id="MF_01911">
    <property type="entry name" value="HTH_type_Hpr"/>
    <property type="match status" value="1"/>
</dbReference>
<dbReference type="InterPro" id="IPR000835">
    <property type="entry name" value="HTH_MarR-typ"/>
</dbReference>
<dbReference type="InterPro" id="IPR023488">
    <property type="entry name" value="HTH_tscrpt_reg_Hpr"/>
</dbReference>
<dbReference type="InterPro" id="IPR039422">
    <property type="entry name" value="MarR/SlyA-like"/>
</dbReference>
<dbReference type="InterPro" id="IPR023187">
    <property type="entry name" value="Tscrpt_reg_MarR-type_CS"/>
</dbReference>
<dbReference type="InterPro" id="IPR036388">
    <property type="entry name" value="WH-like_DNA-bd_sf"/>
</dbReference>
<dbReference type="InterPro" id="IPR036390">
    <property type="entry name" value="WH_DNA-bd_sf"/>
</dbReference>
<dbReference type="NCBIfam" id="NF010349">
    <property type="entry name" value="PRK13777.1"/>
    <property type="match status" value="1"/>
</dbReference>
<dbReference type="PANTHER" id="PTHR33164:SF58">
    <property type="entry name" value="DNA-BINDING TRANSCRIPTIONAL REPRESSOR SCOC"/>
    <property type="match status" value="1"/>
</dbReference>
<dbReference type="PANTHER" id="PTHR33164">
    <property type="entry name" value="TRANSCRIPTIONAL REGULATOR, MARR FAMILY"/>
    <property type="match status" value="1"/>
</dbReference>
<dbReference type="Pfam" id="PF01047">
    <property type="entry name" value="MarR"/>
    <property type="match status" value="1"/>
</dbReference>
<dbReference type="SMART" id="SM00347">
    <property type="entry name" value="HTH_MARR"/>
    <property type="match status" value="1"/>
</dbReference>
<dbReference type="SUPFAM" id="SSF46785">
    <property type="entry name" value="Winged helix' DNA-binding domain"/>
    <property type="match status" value="1"/>
</dbReference>
<dbReference type="PROSITE" id="PS01117">
    <property type="entry name" value="HTH_MARR_1"/>
    <property type="match status" value="1"/>
</dbReference>
<dbReference type="PROSITE" id="PS50995">
    <property type="entry name" value="HTH_MARR_2"/>
    <property type="match status" value="1"/>
</dbReference>
<accession>B7HG19</accession>
<name>HPR_BACC4</name>
<sequence length="185" mass="21730">MKSGEKDYSVKEAMIFSQRIAQLSKALWKCVEKDWQQWIKPYDLNINEHHILTIAYHLKGASISEIAKFGVMHVSTAFNFSKKLEERGYLVFSKKEDDKRNTYIEITDKGEELLLRLMEEYDPENNSVFNGALALRNFYGKFPENIELIAILRNIYGQDFIDIFEKSLEDIEENFTESDQKLVKK</sequence>
<reference key="1">
    <citation type="submission" date="2008-10" db="EMBL/GenBank/DDBJ databases">
        <title>Genome sequence of Bacillus cereus B4264.</title>
        <authorList>
            <person name="Dodson R.J."/>
            <person name="Durkin A.S."/>
            <person name="Rosovitz M.J."/>
            <person name="Rasko D.A."/>
            <person name="Hoffmaster A."/>
            <person name="Ravel J."/>
            <person name="Sutton G."/>
        </authorList>
    </citation>
    <scope>NUCLEOTIDE SEQUENCE [LARGE SCALE GENOMIC DNA]</scope>
    <source>
        <strain>B4264</strain>
    </source>
</reference>
<gene>
    <name evidence="1" type="primary">hpr</name>
    <name type="ordered locus">BCB4264_A1081</name>
</gene>
<feature type="chain" id="PRO_1000188794" description="HTH-type transcriptional regulator Hpr">
    <location>
        <begin position="1"/>
        <end position="185"/>
    </location>
</feature>
<feature type="domain" description="HTH marR-type" evidence="1">
    <location>
        <begin position="13"/>
        <end position="157"/>
    </location>
</feature>
<feature type="DNA-binding region" description="H-T-H motif" evidence="1">
    <location>
        <begin position="63"/>
        <end position="86"/>
    </location>
</feature>
<comment type="function">
    <text evidence="1">Negative regulator of protease production and sporulation.</text>
</comment>
<comment type="subunit">
    <text evidence="1">Homodimer.</text>
</comment>
<keyword id="KW-0238">DNA-binding</keyword>
<keyword id="KW-0678">Repressor</keyword>
<keyword id="KW-0749">Sporulation</keyword>
<keyword id="KW-0804">Transcription</keyword>
<keyword id="KW-0805">Transcription regulation</keyword>
<organism>
    <name type="scientific">Bacillus cereus (strain B4264)</name>
    <dbReference type="NCBI Taxonomy" id="405532"/>
    <lineage>
        <taxon>Bacteria</taxon>
        <taxon>Bacillati</taxon>
        <taxon>Bacillota</taxon>
        <taxon>Bacilli</taxon>
        <taxon>Bacillales</taxon>
        <taxon>Bacillaceae</taxon>
        <taxon>Bacillus</taxon>
        <taxon>Bacillus cereus group</taxon>
    </lineage>
</organism>